<feature type="chain" id="PRO_0000358062" description="NADH-quinone oxidoreductase subunit C">
    <location>
        <begin position="1"/>
        <end position="200"/>
    </location>
</feature>
<keyword id="KW-0997">Cell inner membrane</keyword>
<keyword id="KW-1003">Cell membrane</keyword>
<keyword id="KW-0472">Membrane</keyword>
<keyword id="KW-0520">NAD</keyword>
<keyword id="KW-0874">Quinone</keyword>
<keyword id="KW-1278">Translocase</keyword>
<keyword id="KW-0813">Transport</keyword>
<keyword id="KW-0830">Ubiquinone</keyword>
<reference key="1">
    <citation type="submission" date="2008-02" db="EMBL/GenBank/DDBJ databases">
        <title>Complete sequence of chromosome 1 of Burkholderia cenocepacia MC0-3.</title>
        <authorList>
            <person name="Copeland A."/>
            <person name="Lucas S."/>
            <person name="Lapidus A."/>
            <person name="Barry K."/>
            <person name="Bruce D."/>
            <person name="Goodwin L."/>
            <person name="Glavina del Rio T."/>
            <person name="Dalin E."/>
            <person name="Tice H."/>
            <person name="Pitluck S."/>
            <person name="Chain P."/>
            <person name="Malfatti S."/>
            <person name="Shin M."/>
            <person name="Vergez L."/>
            <person name="Schmutz J."/>
            <person name="Larimer F."/>
            <person name="Land M."/>
            <person name="Hauser L."/>
            <person name="Kyrpides N."/>
            <person name="Mikhailova N."/>
            <person name="Tiedje J."/>
            <person name="Richardson P."/>
        </authorList>
    </citation>
    <scope>NUCLEOTIDE SEQUENCE [LARGE SCALE GENOMIC DNA]</scope>
    <source>
        <strain>MC0-3</strain>
    </source>
</reference>
<proteinExistence type="inferred from homology"/>
<accession>B1JVN9</accession>
<comment type="function">
    <text evidence="1">NDH-1 shuttles electrons from NADH, via FMN and iron-sulfur (Fe-S) centers, to quinones in the respiratory chain. The immediate electron acceptor for the enzyme in this species is believed to be ubiquinone. Couples the redox reaction to proton translocation (for every two electrons transferred, four hydrogen ions are translocated across the cytoplasmic membrane), and thus conserves the redox energy in a proton gradient.</text>
</comment>
<comment type="catalytic activity">
    <reaction evidence="1">
        <text>a quinone + NADH + 5 H(+)(in) = a quinol + NAD(+) + 4 H(+)(out)</text>
        <dbReference type="Rhea" id="RHEA:57888"/>
        <dbReference type="ChEBI" id="CHEBI:15378"/>
        <dbReference type="ChEBI" id="CHEBI:24646"/>
        <dbReference type="ChEBI" id="CHEBI:57540"/>
        <dbReference type="ChEBI" id="CHEBI:57945"/>
        <dbReference type="ChEBI" id="CHEBI:132124"/>
    </reaction>
</comment>
<comment type="subunit">
    <text evidence="1">NDH-1 is composed of 14 different subunits. Subunits NuoB, C, D, E, F, and G constitute the peripheral sector of the complex.</text>
</comment>
<comment type="subcellular location">
    <subcellularLocation>
        <location evidence="1">Cell inner membrane</location>
        <topology evidence="1">Peripheral membrane protein</topology>
        <orientation evidence="1">Cytoplasmic side</orientation>
    </subcellularLocation>
</comment>
<comment type="similarity">
    <text evidence="1">Belongs to the complex I 30 kDa subunit family.</text>
</comment>
<gene>
    <name evidence="1" type="primary">nuoC</name>
    <name type="ordered locus">Bcenmc03_2271</name>
</gene>
<organism>
    <name type="scientific">Burkholderia orbicola (strain MC0-3)</name>
    <dbReference type="NCBI Taxonomy" id="406425"/>
    <lineage>
        <taxon>Bacteria</taxon>
        <taxon>Pseudomonadati</taxon>
        <taxon>Pseudomonadota</taxon>
        <taxon>Betaproteobacteria</taxon>
        <taxon>Burkholderiales</taxon>
        <taxon>Burkholderiaceae</taxon>
        <taxon>Burkholderia</taxon>
        <taxon>Burkholderia cepacia complex</taxon>
        <taxon>Burkholderia orbicola</taxon>
    </lineage>
</organism>
<sequence length="200" mass="22823">MASKIETLKANLEAALGARVVSLTEAIGELTLVVKASDYLEVAKTLRDDPKLRFEQLIDLCGVDYQTFGDGAYDGPRFAAVSHLLSVTNNWRLRLRAFAPDDDLPIVASLVDIWTSANWYEREAFDLYGIVFEGHPDLRRILTDYGFIGHPFRKDFPVSGYVEMRYDPEEKRVVYQPVTIEPREITPRVIREDRYGGLKH</sequence>
<dbReference type="EC" id="7.1.1.-" evidence="1"/>
<dbReference type="EMBL" id="CP000958">
    <property type="protein sequence ID" value="ACA91432.1"/>
    <property type="molecule type" value="Genomic_DNA"/>
</dbReference>
<dbReference type="RefSeq" id="WP_006478264.1">
    <property type="nucleotide sequence ID" value="NC_010508.1"/>
</dbReference>
<dbReference type="SMR" id="B1JVN9"/>
<dbReference type="GeneID" id="83049059"/>
<dbReference type="KEGG" id="bcm:Bcenmc03_2271"/>
<dbReference type="HOGENOM" id="CLU_042628_2_1_4"/>
<dbReference type="Proteomes" id="UP000002169">
    <property type="component" value="Chromosome 1"/>
</dbReference>
<dbReference type="GO" id="GO:0005886">
    <property type="term" value="C:plasma membrane"/>
    <property type="evidence" value="ECO:0007669"/>
    <property type="project" value="UniProtKB-SubCell"/>
</dbReference>
<dbReference type="GO" id="GO:0008137">
    <property type="term" value="F:NADH dehydrogenase (ubiquinone) activity"/>
    <property type="evidence" value="ECO:0007669"/>
    <property type="project" value="InterPro"/>
</dbReference>
<dbReference type="GO" id="GO:0050136">
    <property type="term" value="F:NADH:ubiquinone reductase (non-electrogenic) activity"/>
    <property type="evidence" value="ECO:0007669"/>
    <property type="project" value="UniProtKB-UniRule"/>
</dbReference>
<dbReference type="GO" id="GO:0048038">
    <property type="term" value="F:quinone binding"/>
    <property type="evidence" value="ECO:0007669"/>
    <property type="project" value="UniProtKB-KW"/>
</dbReference>
<dbReference type="Gene3D" id="3.30.460.80">
    <property type="entry name" value="NADH:ubiquinone oxidoreductase, 30kDa subunit"/>
    <property type="match status" value="1"/>
</dbReference>
<dbReference type="HAMAP" id="MF_01357">
    <property type="entry name" value="NDH1_NuoC"/>
    <property type="match status" value="1"/>
</dbReference>
<dbReference type="InterPro" id="IPR010218">
    <property type="entry name" value="NADH_DH_suC"/>
</dbReference>
<dbReference type="InterPro" id="IPR037232">
    <property type="entry name" value="NADH_quin_OxRdtase_su_C/D-like"/>
</dbReference>
<dbReference type="InterPro" id="IPR001268">
    <property type="entry name" value="NADH_UbQ_OxRdtase_30kDa_su"/>
</dbReference>
<dbReference type="InterPro" id="IPR020396">
    <property type="entry name" value="NADH_UbQ_OxRdtase_CS"/>
</dbReference>
<dbReference type="NCBIfam" id="TIGR01961">
    <property type="entry name" value="NuoC_fam"/>
    <property type="match status" value="1"/>
</dbReference>
<dbReference type="NCBIfam" id="NF004730">
    <property type="entry name" value="PRK06074.1-1"/>
    <property type="match status" value="1"/>
</dbReference>
<dbReference type="PANTHER" id="PTHR10884:SF14">
    <property type="entry name" value="NADH DEHYDROGENASE [UBIQUINONE] IRON-SULFUR PROTEIN 3, MITOCHONDRIAL"/>
    <property type="match status" value="1"/>
</dbReference>
<dbReference type="PANTHER" id="PTHR10884">
    <property type="entry name" value="NADH DEHYDROGENASE UBIQUINONE IRON-SULFUR PROTEIN 3"/>
    <property type="match status" value="1"/>
</dbReference>
<dbReference type="Pfam" id="PF00329">
    <property type="entry name" value="Complex1_30kDa"/>
    <property type="match status" value="1"/>
</dbReference>
<dbReference type="SUPFAM" id="SSF143243">
    <property type="entry name" value="Nqo5-like"/>
    <property type="match status" value="1"/>
</dbReference>
<dbReference type="PROSITE" id="PS00542">
    <property type="entry name" value="COMPLEX1_30K"/>
    <property type="match status" value="1"/>
</dbReference>
<evidence type="ECO:0000255" key="1">
    <source>
        <dbReference type="HAMAP-Rule" id="MF_01357"/>
    </source>
</evidence>
<name>NUOC_BURO0</name>
<protein>
    <recommendedName>
        <fullName evidence="1">NADH-quinone oxidoreductase subunit C</fullName>
        <ecNumber evidence="1">7.1.1.-</ecNumber>
    </recommendedName>
    <alternativeName>
        <fullName evidence="1">NADH dehydrogenase I subunit C</fullName>
    </alternativeName>
    <alternativeName>
        <fullName evidence="1">NDH-1 subunit C</fullName>
    </alternativeName>
</protein>